<comment type="function">
    <text evidence="4 5 7 8">Transporter for the divalent cation Zn(2+). Mediates the influx of Zn(2+) into cells from extracellular space (PubMed:14525987, PubMed:15634741, PubMed:35169020). Controls Zn(2+) accumulation into dentate gyrus granule cells in the hippocampus (PubMed:35169020). Mediates Zn(2+) reuptake from the secreted milk within the alveolar lumen (PubMed:19458277).</text>
</comment>
<comment type="catalytic activity">
    <reaction evidence="4 5 8">
        <text>Zn(2+)(in) = Zn(2+)(out)</text>
        <dbReference type="Rhea" id="RHEA:29351"/>
        <dbReference type="ChEBI" id="CHEBI:29105"/>
    </reaction>
    <physiologicalReaction direction="left-to-right" evidence="10">
        <dbReference type="Rhea" id="RHEA:29352"/>
    </physiologicalReaction>
</comment>
<comment type="biophysicochemical properties">
    <kinetics>
        <KM evidence="4">1.6 uM for Zn(2+)</KM>
    </kinetics>
</comment>
<comment type="subcellular location">
    <subcellularLocation>
        <location evidence="5">Cell membrane</location>
        <topology evidence="3">Multi-pass membrane protein</topology>
    </subcellularLocation>
    <subcellularLocation>
        <location evidence="7">Apical cell membrane</location>
        <topology evidence="3">Multi-pass membrane protein</topology>
    </subcellularLocation>
    <text evidence="5 7">Localized primarily at the cell surface but also found in a perinuclear compartment in HC11 cells (PubMed:15634741). In mammary epithelial cell, localized primary to the apical membrane (PubMed:19458277).</text>
</comment>
<comment type="tissue specificity">
    <text evidence="4 7 8">Highly expressed in the testes (PubMed:14525987). Highly expressed in dentate gyrus granule cells of the hippocampus (PubMed:35169020). Expressed in the mammary gland (PubMed:19458277).</text>
</comment>
<comment type="developmental stage">
    <text evidence="6">Expressed very early during development of the mouse embryo. Expression is higher in testes, ovary, and the developing nervous system relative to other tissues.</text>
</comment>
<comment type="disruption phenotype">
    <text evidence="6">Knockout mice are viable and fertile and under normal growth conditions exhibit no obvious phenotypic abnormalities, and are only slightly more susceptible to the effects of dietary zinc deficiency.</text>
</comment>
<comment type="similarity">
    <text evidence="9">Belongs to the ZIP transporter (TC 2.A.5) family.</text>
</comment>
<reference key="1">
    <citation type="journal article" date="2004" name="Genome Res.">
        <title>The status, quality, and expansion of the NIH full-length cDNA project: the Mammalian Gene Collection (MGC).</title>
        <authorList>
            <consortium name="The MGC Project Team"/>
        </authorList>
    </citation>
    <scope>NUCLEOTIDE SEQUENCE [LARGE SCALE MRNA]</scope>
    <source>
        <tissue>Mammary tumor</tissue>
    </source>
</reference>
<reference key="2">
    <citation type="journal article" date="2010" name="Cell">
        <title>A tissue-specific atlas of mouse protein phosphorylation and expression.</title>
        <authorList>
            <person name="Huttlin E.L."/>
            <person name="Jedrychowski M.P."/>
            <person name="Elias J.E."/>
            <person name="Goswami T."/>
            <person name="Rad R."/>
            <person name="Beausoleil S.A."/>
            <person name="Villen J."/>
            <person name="Haas W."/>
            <person name="Sowa M.E."/>
            <person name="Gygi S.P."/>
        </authorList>
    </citation>
    <scope>IDENTIFICATION BY MASS SPECTROMETRY [LARGE SCALE ANALYSIS]</scope>
    <source>
        <tissue>Brain</tissue>
        <tissue>Kidney</tissue>
        <tissue>Pancreas</tissue>
    </source>
</reference>
<reference key="3">
    <citation type="journal article" date="2003" name="J. Biol. Chem.">
        <title>Structure, function, and regulation of a subfamily of mouse zinc transporter genes.</title>
        <authorList>
            <person name="Dufner-Beattie J."/>
            <person name="Langmade S.J."/>
            <person name="Wang F."/>
            <person name="Eide D."/>
            <person name="Andrews G.K."/>
        </authorList>
    </citation>
    <scope>FUNCTION</scope>
    <scope>TRANSPORTER ACTIVITY</scope>
    <scope>BIOPHYSICOCHEMICAL PROPERTIES</scope>
    <scope>TISSUE SPECIFICITY</scope>
</reference>
<reference key="4">
    <citation type="journal article" date="2005" name="Am. J. Physiol.">
        <title>Zip3 plays a major role in zinc uptake into mammary epithelial cells and is regulated by prolactin.</title>
        <authorList>
            <person name="Kelleher S.L."/>
            <person name="Loennerdal B."/>
        </authorList>
    </citation>
    <scope>SUBCELLULAR LOCATION</scope>
    <scope>FUNCTION</scope>
    <scope>TRANSPORTER ACTIVITY</scope>
</reference>
<reference key="5">
    <citation type="journal article" date="2005" name="Mol. Cell. Biol.">
        <title>Generation and characterization of mice lacking the zinc uptake transporter ZIP3.</title>
        <authorList>
            <person name="Dufner-Beattie J."/>
            <person name="Huang Z.L."/>
            <person name="Geiser J."/>
            <person name="Xu W."/>
            <person name="Andrews G.K."/>
        </authorList>
    </citation>
    <scope>DISRUPTION PHENOTYPE</scope>
    <scope>DEVELOPMENTAL STAGE</scope>
</reference>
<reference key="6">
    <citation type="journal article" date="2009" name="Am. J. Physiol.">
        <title>Zip3 (Slc39a3) functions in zinc reuptake from the alveolar lumen in lactating mammary gland.</title>
        <authorList>
            <person name="Kelleher S.L."/>
            <person name="Lopez V."/>
            <person name="Loennerdal B."/>
            <person name="Dufner-Beattie J."/>
            <person name="Andrews G.K."/>
        </authorList>
    </citation>
    <scope>FUNCTION</scope>
    <scope>SUBCELLULAR LOCATION</scope>
    <scope>TISSUE SPECIFICITY</scope>
</reference>
<reference key="7">
    <citation type="journal article" date="2022" name="J. Neurosci.">
        <title>The ZIP3 Zinc Transporter Is Localized to Mossy Fiber Terminals and Is Required for Kainate-Induced Degeneration of CA3 Neurons.</title>
        <authorList>
            <person name="Bogdanovic M."/>
            <person name="Asraf H."/>
            <person name="Gottesman N."/>
            <person name="Sekler I."/>
            <person name="Aizenman E."/>
            <person name="Hershfinkel M."/>
        </authorList>
    </citation>
    <scope>FUNCTION</scope>
    <scope>TRANSPORTER ACTIVITY</scope>
    <scope>TISSUE SPECIFICITY</scope>
</reference>
<name>S39A3_MOUSE</name>
<evidence type="ECO:0000250" key="1">
    <source>
        <dbReference type="UniProtKB" id="Q5U1X7"/>
    </source>
</evidence>
<evidence type="ECO:0000250" key="2">
    <source>
        <dbReference type="UniProtKB" id="Q9BRY0"/>
    </source>
</evidence>
<evidence type="ECO:0000255" key="3"/>
<evidence type="ECO:0000269" key="4">
    <source>
    </source>
</evidence>
<evidence type="ECO:0000269" key="5">
    <source>
    </source>
</evidence>
<evidence type="ECO:0000269" key="6">
    <source>
    </source>
</evidence>
<evidence type="ECO:0000269" key="7">
    <source>
    </source>
</evidence>
<evidence type="ECO:0000269" key="8">
    <source>
    </source>
</evidence>
<evidence type="ECO:0000305" key="9"/>
<evidence type="ECO:0000305" key="10">
    <source>
    </source>
</evidence>
<proteinExistence type="evidence at protein level"/>
<protein>
    <recommendedName>
        <fullName>Zinc transporter ZIP3</fullName>
    </recommendedName>
    <alternativeName>
        <fullName>Solute carrier family 39 member 3</fullName>
    </alternativeName>
    <alternativeName>
        <fullName>Zrt- and Irt-like protein 3</fullName>
        <shortName>ZIP-3</shortName>
    </alternativeName>
</protein>
<feature type="chain" id="PRO_0000312869" description="Zinc transporter ZIP3">
    <location>
        <begin position="1"/>
        <end position="317"/>
    </location>
</feature>
<feature type="topological domain" description="Extracellular" evidence="3">
    <location>
        <begin position="1"/>
        <end position="3"/>
    </location>
</feature>
<feature type="transmembrane region" description="Helical" evidence="3">
    <location>
        <begin position="4"/>
        <end position="24"/>
    </location>
</feature>
<feature type="topological domain" description="Cytoplasmic" evidence="3">
    <location>
        <begin position="25"/>
        <end position="42"/>
    </location>
</feature>
<feature type="transmembrane region" description="Helical" evidence="3">
    <location>
        <begin position="43"/>
        <end position="63"/>
    </location>
</feature>
<feature type="topological domain" description="Extracellular" evidence="3">
    <location>
        <begin position="64"/>
        <end position="85"/>
    </location>
</feature>
<feature type="transmembrane region" description="Helical" evidence="3">
    <location>
        <begin position="86"/>
        <end position="106"/>
    </location>
</feature>
<feature type="topological domain" description="Cytoplasmic" evidence="3">
    <location>
        <begin position="107"/>
        <end position="172"/>
    </location>
</feature>
<feature type="transmembrane region" description="Helical" evidence="3">
    <location>
        <begin position="173"/>
        <end position="193"/>
    </location>
</feature>
<feature type="topological domain" description="Extracellular" evidence="3">
    <location>
        <begin position="194"/>
        <end position="199"/>
    </location>
</feature>
<feature type="transmembrane region" description="Helical" evidence="3">
    <location>
        <begin position="200"/>
        <end position="220"/>
    </location>
</feature>
<feature type="topological domain" description="Cytoplasmic" evidence="3">
    <location>
        <begin position="221"/>
        <end position="232"/>
    </location>
</feature>
<feature type="transmembrane region" description="Helical" evidence="3">
    <location>
        <begin position="233"/>
        <end position="253"/>
    </location>
</feature>
<feature type="topological domain" description="Extracellular" evidence="3">
    <location>
        <begin position="254"/>
        <end position="265"/>
    </location>
</feature>
<feature type="transmembrane region" description="Helical" evidence="3">
    <location>
        <begin position="266"/>
        <end position="286"/>
    </location>
</feature>
<feature type="topological domain" description="Cytoplasmic" evidence="3">
    <location>
        <begin position="287"/>
        <end position="294"/>
    </location>
</feature>
<feature type="transmembrane region" description="Helical" evidence="3">
    <location>
        <begin position="295"/>
        <end position="315"/>
    </location>
</feature>
<feature type="topological domain" description="Extracellular" evidence="3">
    <location>
        <begin position="316"/>
        <end position="317"/>
    </location>
</feature>
<feature type="modified residue" description="Phosphoserine" evidence="2">
    <location>
        <position position="125"/>
    </location>
</feature>
<feature type="modified residue" description="Phosphoserine" evidence="1">
    <location>
        <position position="129"/>
    </location>
</feature>
<accession>Q99K24</accession>
<gene>
    <name type="primary">Slc39a3</name>
    <name type="synonym">Zip3</name>
</gene>
<dbReference type="EMBL" id="BC005502">
    <property type="protein sequence ID" value="AAH05502.1"/>
    <property type="molecule type" value="mRNA"/>
</dbReference>
<dbReference type="CCDS" id="CCDS24041.1"/>
<dbReference type="RefSeq" id="NP_001345827.2">
    <property type="nucleotide sequence ID" value="NM_001358898.2"/>
</dbReference>
<dbReference type="RefSeq" id="NP_598896.3">
    <property type="nucleotide sequence ID" value="NM_134135.3"/>
</dbReference>
<dbReference type="SMR" id="Q99K24"/>
<dbReference type="FunCoup" id="Q99K24">
    <property type="interactions" value="374"/>
</dbReference>
<dbReference type="STRING" id="10090.ENSMUSP00000128256"/>
<dbReference type="iPTMnet" id="Q99K24"/>
<dbReference type="PhosphoSitePlus" id="Q99K24"/>
<dbReference type="jPOST" id="Q99K24"/>
<dbReference type="PaxDb" id="10090-ENSMUSP00000113147"/>
<dbReference type="ProteomicsDB" id="260783"/>
<dbReference type="Pumba" id="Q99K24"/>
<dbReference type="ABCD" id="Q99K24">
    <property type="antibodies" value="1 sequenced antibody"/>
</dbReference>
<dbReference type="Antibodypedia" id="23039">
    <property type="antibodies" value="119 antibodies from 27 providers"/>
</dbReference>
<dbReference type="DNASU" id="106947"/>
<dbReference type="Ensembl" id="ENSMUST00000059551.7">
    <property type="protein sequence ID" value="ENSMUSP00000057094.7"/>
    <property type="gene ID" value="ENSMUSG00000046822.15"/>
</dbReference>
<dbReference type="Ensembl" id="ENSMUST00000117276.11">
    <property type="protein sequence ID" value="ENSMUSP00000113147.5"/>
    <property type="gene ID" value="ENSMUSG00000046822.15"/>
</dbReference>
<dbReference type="Ensembl" id="ENSMUST00000168076.2">
    <property type="protein sequence ID" value="ENSMUSP00000128256.2"/>
    <property type="gene ID" value="ENSMUSG00000046822.15"/>
</dbReference>
<dbReference type="GeneID" id="106947"/>
<dbReference type="KEGG" id="mmu:106947"/>
<dbReference type="UCSC" id="uc007gfq.1">
    <property type="organism name" value="mouse"/>
</dbReference>
<dbReference type="AGR" id="MGI:2147269"/>
<dbReference type="CTD" id="29985"/>
<dbReference type="MGI" id="MGI:2147269">
    <property type="gene designation" value="Slc39a3"/>
</dbReference>
<dbReference type="VEuPathDB" id="HostDB:ENSMUSG00000046822"/>
<dbReference type="eggNOG" id="KOG1558">
    <property type="taxonomic scope" value="Eukaryota"/>
</dbReference>
<dbReference type="GeneTree" id="ENSGT00940000160231"/>
<dbReference type="HOGENOM" id="CLU_040462_4_1_1"/>
<dbReference type="InParanoid" id="Q99K24"/>
<dbReference type="OMA" id="HHHGHFN"/>
<dbReference type="OrthoDB" id="448280at2759"/>
<dbReference type="PhylomeDB" id="Q99K24"/>
<dbReference type="TreeFam" id="TF317098"/>
<dbReference type="Reactome" id="R-MMU-442380">
    <property type="pathway name" value="Zinc influx into cells by the SLC39 gene family"/>
</dbReference>
<dbReference type="BioGRID-ORCS" id="106947">
    <property type="hits" value="1 hit in 77 CRISPR screens"/>
</dbReference>
<dbReference type="ChiTaRS" id="Slc39a3">
    <property type="organism name" value="mouse"/>
</dbReference>
<dbReference type="PRO" id="PR:Q99K24"/>
<dbReference type="Proteomes" id="UP000000589">
    <property type="component" value="Chromosome 10"/>
</dbReference>
<dbReference type="RNAct" id="Q99K24">
    <property type="molecule type" value="protein"/>
</dbReference>
<dbReference type="Bgee" id="ENSMUSG00000046822">
    <property type="expression patterns" value="Expressed in embryonic brain and 243 other cell types or tissues"/>
</dbReference>
<dbReference type="ExpressionAtlas" id="Q99K24">
    <property type="expression patterns" value="baseline and differential"/>
</dbReference>
<dbReference type="GO" id="GO:0016324">
    <property type="term" value="C:apical plasma membrane"/>
    <property type="evidence" value="ECO:0000314"/>
    <property type="project" value="UniProtKB"/>
</dbReference>
<dbReference type="GO" id="GO:0098686">
    <property type="term" value="C:hippocampal mossy fiber to CA3 synapse"/>
    <property type="evidence" value="ECO:0000314"/>
    <property type="project" value="UniProtKB"/>
</dbReference>
<dbReference type="GO" id="GO:0005886">
    <property type="term" value="C:plasma membrane"/>
    <property type="evidence" value="ECO:0000315"/>
    <property type="project" value="UniProtKB"/>
</dbReference>
<dbReference type="GO" id="GO:0005385">
    <property type="term" value="F:zinc ion transmembrane transporter activity"/>
    <property type="evidence" value="ECO:0000314"/>
    <property type="project" value="MGI"/>
</dbReference>
<dbReference type="GO" id="GO:0000902">
    <property type="term" value="P:cell morphogenesis"/>
    <property type="evidence" value="ECO:0000315"/>
    <property type="project" value="MGI"/>
</dbReference>
<dbReference type="GO" id="GO:0048701">
    <property type="term" value="P:embryonic cranial skeleton morphogenesis"/>
    <property type="evidence" value="ECO:0000316"/>
    <property type="project" value="MGI"/>
</dbReference>
<dbReference type="GO" id="GO:0001701">
    <property type="term" value="P:in utero embryonic development"/>
    <property type="evidence" value="ECO:0000316"/>
    <property type="project" value="MGI"/>
</dbReference>
<dbReference type="GO" id="GO:0060173">
    <property type="term" value="P:limb development"/>
    <property type="evidence" value="ECO:0000316"/>
    <property type="project" value="MGI"/>
</dbReference>
<dbReference type="GO" id="GO:0043029">
    <property type="term" value="P:T cell homeostasis"/>
    <property type="evidence" value="ECO:0000315"/>
    <property type="project" value="MGI"/>
</dbReference>
<dbReference type="GO" id="GO:0071577">
    <property type="term" value="P:zinc ion transmembrane transport"/>
    <property type="evidence" value="ECO:0000315"/>
    <property type="project" value="UniProtKB"/>
</dbReference>
<dbReference type="GO" id="GO:0006829">
    <property type="term" value="P:zinc ion transport"/>
    <property type="evidence" value="ECO:0000314"/>
    <property type="project" value="MGI"/>
</dbReference>
<dbReference type="InterPro" id="IPR003689">
    <property type="entry name" value="ZIP"/>
</dbReference>
<dbReference type="PANTHER" id="PTHR11040:SF221">
    <property type="entry name" value="ZINC TRANSPORTER ZIP3"/>
    <property type="match status" value="1"/>
</dbReference>
<dbReference type="PANTHER" id="PTHR11040">
    <property type="entry name" value="ZINC/IRON TRANSPORTER"/>
    <property type="match status" value="1"/>
</dbReference>
<dbReference type="Pfam" id="PF02535">
    <property type="entry name" value="Zip"/>
    <property type="match status" value="1"/>
</dbReference>
<keyword id="KW-1003">Cell membrane</keyword>
<keyword id="KW-0406">Ion transport</keyword>
<keyword id="KW-0472">Membrane</keyword>
<keyword id="KW-0597">Phosphoprotein</keyword>
<keyword id="KW-1185">Reference proteome</keyword>
<keyword id="KW-0812">Transmembrane</keyword>
<keyword id="KW-1133">Transmembrane helix</keyword>
<keyword id="KW-0813">Transport</keyword>
<keyword id="KW-0862">Zinc</keyword>
<keyword id="KW-0864">Zinc transport</keyword>
<sequence>MTKLLVAKVLCMVGVFFFMLLGSLLPVKVIEADLEKAHRSKKVLSLCNTFGGGVFLATCFNALLPAVRDKLQQVLSLGHISTDYPLAETLMMVGFFLTVFVEQLVLTFRRERPPFIDLETFNAGSDAGSDSEYESPFVGVGNRSHSLYPEPTAHTHGAGLRLRELGRPGPLRLLSLVFALSAHSVFEGLALGLQEEGERVVSLFVGVAIHETLVAVALGISMARSAVPLRDAAKLAVTVSAMIPVGIGLGLGIESARSVASSVASALLQGLAGGTFLFVTFLEILAKELEERSEQLLKVLFLVLGYAVLAGMVFLKW</sequence>
<organism>
    <name type="scientific">Mus musculus</name>
    <name type="common">Mouse</name>
    <dbReference type="NCBI Taxonomy" id="10090"/>
    <lineage>
        <taxon>Eukaryota</taxon>
        <taxon>Metazoa</taxon>
        <taxon>Chordata</taxon>
        <taxon>Craniata</taxon>
        <taxon>Vertebrata</taxon>
        <taxon>Euteleostomi</taxon>
        <taxon>Mammalia</taxon>
        <taxon>Eutheria</taxon>
        <taxon>Euarchontoglires</taxon>
        <taxon>Glires</taxon>
        <taxon>Rodentia</taxon>
        <taxon>Myomorpha</taxon>
        <taxon>Muroidea</taxon>
        <taxon>Muridae</taxon>
        <taxon>Murinae</taxon>
        <taxon>Mus</taxon>
        <taxon>Mus</taxon>
    </lineage>
</organism>